<sequence length="249" mass="27350">MNVLSCSINTLIKEGLYEISGVEVGQHFYWQIGGFQVHAQVLITSWVVIAILLGSAVLAIRNPQTIPTDGQNFFEFVLEFIRDVSKTQIGEEYGPWVPFIGTLFLFIFVSNWSGALLPWKIIQLPQGELAAPTNDINTTVALALLTSVAYFYAGLSKKGLGYFSKYIQPTPILLPINILEDFTKPLSLSFRLFGNILADELVVVVLVSLVPLVVPIPVMFLGLFTSGIQALIFATLAAAYIGESMEGHH</sequence>
<dbReference type="EMBL" id="AP000423">
    <property type="protein sequence ID" value="BAA84373.1"/>
    <property type="molecule type" value="Genomic_DNA"/>
</dbReference>
<dbReference type="RefSeq" id="NP_051047.1">
    <property type="nucleotide sequence ID" value="NC_000932.1"/>
</dbReference>
<dbReference type="SMR" id="P56758"/>
<dbReference type="BioGRID" id="29981">
    <property type="interactions" value="1"/>
</dbReference>
<dbReference type="FunCoup" id="P56758">
    <property type="interactions" value="129"/>
</dbReference>
<dbReference type="STRING" id="3702.P56758"/>
<dbReference type="GlyGen" id="P56758">
    <property type="glycosylation" value="1 site"/>
</dbReference>
<dbReference type="PaxDb" id="3702-ATCG00150.1"/>
<dbReference type="ProteomicsDB" id="240913"/>
<dbReference type="EnsemblPlants" id="ATCG00150.1">
    <property type="protein sequence ID" value="ATCG00150.1"/>
    <property type="gene ID" value="ATCG00150"/>
</dbReference>
<dbReference type="GeneID" id="844787"/>
<dbReference type="Gramene" id="ATCG00150.1">
    <property type="protein sequence ID" value="ATCG00150.1"/>
    <property type="gene ID" value="ATCG00150"/>
</dbReference>
<dbReference type="KEGG" id="ath:ArthCp010"/>
<dbReference type="Araport" id="ATCG00150"/>
<dbReference type="TAIR" id="ATCG00150">
    <property type="gene designation" value="ATPI"/>
</dbReference>
<dbReference type="eggNOG" id="KOG4665">
    <property type="taxonomic scope" value="Eukaryota"/>
</dbReference>
<dbReference type="HOGENOM" id="CLU_041018_2_4_1"/>
<dbReference type="InParanoid" id="P56758"/>
<dbReference type="OMA" id="GFFWAAF"/>
<dbReference type="BioCyc" id="ARA:ATCG00150-MONOMER"/>
<dbReference type="PRO" id="PR:P56758"/>
<dbReference type="Proteomes" id="UP000006548">
    <property type="component" value="Chloroplast Pltd"/>
</dbReference>
<dbReference type="ExpressionAtlas" id="P56758">
    <property type="expression patterns" value="baseline and differential"/>
</dbReference>
<dbReference type="GO" id="GO:0009507">
    <property type="term" value="C:chloroplast"/>
    <property type="evidence" value="ECO:0007005"/>
    <property type="project" value="TAIR"/>
</dbReference>
<dbReference type="GO" id="GO:0009534">
    <property type="term" value="C:chloroplast thylakoid"/>
    <property type="evidence" value="ECO:0007005"/>
    <property type="project" value="TAIR"/>
</dbReference>
<dbReference type="GO" id="GO:0009535">
    <property type="term" value="C:chloroplast thylakoid membrane"/>
    <property type="evidence" value="ECO:0007005"/>
    <property type="project" value="TAIR"/>
</dbReference>
<dbReference type="GO" id="GO:0005886">
    <property type="term" value="C:plasma membrane"/>
    <property type="evidence" value="ECO:0007669"/>
    <property type="project" value="UniProtKB-UniRule"/>
</dbReference>
<dbReference type="GO" id="GO:0009536">
    <property type="term" value="C:plastid"/>
    <property type="evidence" value="ECO:0007005"/>
    <property type="project" value="TAIR"/>
</dbReference>
<dbReference type="GO" id="GO:0045259">
    <property type="term" value="C:proton-transporting ATP synthase complex"/>
    <property type="evidence" value="ECO:0007669"/>
    <property type="project" value="UniProtKB-KW"/>
</dbReference>
<dbReference type="GO" id="GO:0003729">
    <property type="term" value="F:mRNA binding"/>
    <property type="evidence" value="ECO:0000314"/>
    <property type="project" value="TAIR"/>
</dbReference>
<dbReference type="GO" id="GO:0046933">
    <property type="term" value="F:proton-transporting ATP synthase activity, rotational mechanism"/>
    <property type="evidence" value="ECO:0007669"/>
    <property type="project" value="UniProtKB-UniRule"/>
</dbReference>
<dbReference type="CDD" id="cd00310">
    <property type="entry name" value="ATP-synt_Fo_a_6"/>
    <property type="match status" value="1"/>
</dbReference>
<dbReference type="FunFam" id="1.20.120.220:FF:000001">
    <property type="entry name" value="ATP synthase subunit a, chloroplastic"/>
    <property type="match status" value="1"/>
</dbReference>
<dbReference type="Gene3D" id="1.20.120.220">
    <property type="entry name" value="ATP synthase, F0 complex, subunit A"/>
    <property type="match status" value="1"/>
</dbReference>
<dbReference type="HAMAP" id="MF_01393">
    <property type="entry name" value="ATP_synth_a_bact"/>
    <property type="match status" value="1"/>
</dbReference>
<dbReference type="InterPro" id="IPR045082">
    <property type="entry name" value="ATP_syn_F0_a_bact/chloroplast"/>
</dbReference>
<dbReference type="InterPro" id="IPR000568">
    <property type="entry name" value="ATP_synth_F0_asu"/>
</dbReference>
<dbReference type="InterPro" id="IPR023011">
    <property type="entry name" value="ATP_synth_F0_asu_AS"/>
</dbReference>
<dbReference type="InterPro" id="IPR035908">
    <property type="entry name" value="F0_ATP_A_sf"/>
</dbReference>
<dbReference type="NCBIfam" id="TIGR01131">
    <property type="entry name" value="ATP_synt_6_or_A"/>
    <property type="match status" value="1"/>
</dbReference>
<dbReference type="PANTHER" id="PTHR42823">
    <property type="entry name" value="ATP SYNTHASE SUBUNIT A, CHLOROPLASTIC"/>
    <property type="match status" value="1"/>
</dbReference>
<dbReference type="PANTHER" id="PTHR42823:SF3">
    <property type="entry name" value="ATP SYNTHASE SUBUNIT A, CHLOROPLASTIC"/>
    <property type="match status" value="1"/>
</dbReference>
<dbReference type="Pfam" id="PF00119">
    <property type="entry name" value="ATP-synt_A"/>
    <property type="match status" value="1"/>
</dbReference>
<dbReference type="PRINTS" id="PR00123">
    <property type="entry name" value="ATPASEA"/>
</dbReference>
<dbReference type="SUPFAM" id="SSF81336">
    <property type="entry name" value="F1F0 ATP synthase subunit A"/>
    <property type="match status" value="1"/>
</dbReference>
<dbReference type="PROSITE" id="PS00449">
    <property type="entry name" value="ATPASE_A"/>
    <property type="match status" value="1"/>
</dbReference>
<evidence type="ECO:0000255" key="1">
    <source>
        <dbReference type="HAMAP-Rule" id="MF_01393"/>
    </source>
</evidence>
<organism>
    <name type="scientific">Arabidopsis thaliana</name>
    <name type="common">Mouse-ear cress</name>
    <dbReference type="NCBI Taxonomy" id="3702"/>
    <lineage>
        <taxon>Eukaryota</taxon>
        <taxon>Viridiplantae</taxon>
        <taxon>Streptophyta</taxon>
        <taxon>Embryophyta</taxon>
        <taxon>Tracheophyta</taxon>
        <taxon>Spermatophyta</taxon>
        <taxon>Magnoliopsida</taxon>
        <taxon>eudicotyledons</taxon>
        <taxon>Gunneridae</taxon>
        <taxon>Pentapetalae</taxon>
        <taxon>rosids</taxon>
        <taxon>malvids</taxon>
        <taxon>Brassicales</taxon>
        <taxon>Brassicaceae</taxon>
        <taxon>Camelineae</taxon>
        <taxon>Arabidopsis</taxon>
    </lineage>
</organism>
<accession>P56758</accession>
<proteinExistence type="inferred from homology"/>
<keyword id="KW-0066">ATP synthesis</keyword>
<keyword id="KW-0138">CF(0)</keyword>
<keyword id="KW-0150">Chloroplast</keyword>
<keyword id="KW-0375">Hydrogen ion transport</keyword>
<keyword id="KW-0406">Ion transport</keyword>
<keyword id="KW-0472">Membrane</keyword>
<keyword id="KW-0934">Plastid</keyword>
<keyword id="KW-1185">Reference proteome</keyword>
<keyword id="KW-0793">Thylakoid</keyword>
<keyword id="KW-0812">Transmembrane</keyword>
<keyword id="KW-1133">Transmembrane helix</keyword>
<keyword id="KW-0813">Transport</keyword>
<comment type="function">
    <text evidence="1">Key component of the proton channel; it plays a direct role in the translocation of protons across the membrane.</text>
</comment>
<comment type="subunit">
    <text evidence="1">F-type ATPases have 2 components, CF(1) - the catalytic core - and CF(0) - the membrane proton channel. CF(1) has five subunits: alpha(3), beta(3), gamma(1), delta(1), epsilon(1). CF(0) has four main subunits: a, b, b' and c.</text>
</comment>
<comment type="subcellular location">
    <subcellularLocation>
        <location evidence="1">Plastid</location>
        <location evidence="1">Chloroplast thylakoid membrane</location>
        <topology evidence="1">Multi-pass membrane protein</topology>
    </subcellularLocation>
</comment>
<comment type="similarity">
    <text evidence="1">Belongs to the ATPase A chain family.</text>
</comment>
<gene>
    <name evidence="1" type="primary">atpI</name>
    <name type="ordered locus">AtCg00150</name>
</gene>
<name>ATPI_ARATH</name>
<feature type="chain" id="PRO_0000002578" description="ATP synthase subunit a, chloroplastic">
    <location>
        <begin position="1"/>
        <end position="249"/>
    </location>
</feature>
<feature type="transmembrane region" description="Helical" evidence="1">
    <location>
        <begin position="40"/>
        <end position="60"/>
    </location>
</feature>
<feature type="transmembrane region" description="Helical" evidence="1">
    <location>
        <begin position="97"/>
        <end position="117"/>
    </location>
</feature>
<feature type="transmembrane region" description="Helical" evidence="1">
    <location>
        <begin position="136"/>
        <end position="156"/>
    </location>
</feature>
<feature type="transmembrane region" description="Helical" evidence="1">
    <location>
        <begin position="201"/>
        <end position="221"/>
    </location>
</feature>
<feature type="transmembrane region" description="Helical" evidence="1">
    <location>
        <begin position="222"/>
        <end position="242"/>
    </location>
</feature>
<protein>
    <recommendedName>
        <fullName evidence="1">ATP synthase subunit a, chloroplastic</fullName>
    </recommendedName>
    <alternativeName>
        <fullName evidence="1">ATP synthase F0 sector subunit a</fullName>
    </alternativeName>
    <alternativeName>
        <fullName evidence="1">F-ATPase subunit IV</fullName>
    </alternativeName>
</protein>
<reference key="1">
    <citation type="journal article" date="1999" name="DNA Res.">
        <title>Complete structure of the chloroplast genome of Arabidopsis thaliana.</title>
        <authorList>
            <person name="Sato S."/>
            <person name="Nakamura Y."/>
            <person name="Kaneko T."/>
            <person name="Asamizu E."/>
            <person name="Tabata S."/>
        </authorList>
    </citation>
    <scope>NUCLEOTIDE SEQUENCE [LARGE SCALE GENOMIC DNA]</scope>
    <source>
        <strain>cv. Columbia</strain>
    </source>
</reference>
<geneLocation type="chloroplast"/>